<sequence length="927" mass="106244">MRIKDTLNLGKTKFKMRGNLPVREAEWEKEWEDNHLYEQRLKLNEGHPRFDLHDGPPFANGNIHMGHALNKISKDIIVRYKNMNGYYAPYVPGWDTHGLPVEQQLAKKGIDRKTMDRAKYRELCRQYAEEQVQKQMTDFKRLGVMADWDNPYITLQHEFEGQEIRVFGEMYKKGYIYKGKKPVYWSWSSESTLAEAEVEYKDVEANSIFVAFPVVDSKGIIDPKDTYFVIWTTTPWTIPANEAICVNPKFDYSVVQVGDKKYVVATGLLDKVAEEIGWDDYKVVQTVKGADMEYMKAKHPLYDKESLVTEGFHVTLDDGTGLVHTAPGFGADDFNVGQKYDLPVFSPVDAHGRYTDEVPELEGMFYQDVDKLMVEKLKDAGALLKLKVFTHSYPHDWRTKKPVIFRATTQWFASIAPFRDQILEQIDNAKFIPSWGKTRLYNMIKDRGDWVISRQRAWGVPLPIFYAEDGTPIVTPETIEHIAEIFDKEGSNAWYTHTAKELLPEGFTSEHSPNGEFTKEKDILDVWFDSGSSWSGVMEKRDGLHYPADLYLEGSDQYRGWFNSSLITSVAVTGKAPYKEVLSQGFVLDDKGHKMSKSLGNVISPNDVIKRMGAEIIRLWVAQADTTSDVAVSMGILQQSAESYRKIRNTFRYMLANTSDFDPKENGVAYDDLRSVDQYMEIKLNDLVAECLAAYDKFDFTTVFKKIFNFISNDLSAFYLDFAKDVLYIEGKNSLERRSMQTVIYDAAVKLTKILTPILPHTMEEIWGFLKEPEDYVQLANMPKVENYTNHDELLENWGKFMNLRDDVLKALEDARNKKLIGKSFEAAVTIYPDKETKAMLDDLDADFRQILIVSKLTIVDGEAPENAEKLNNASIVVEHAEGEVCPRCRMIRTDIGEDPKLPELCERCAKIVEEDFPEAAQEGLEE</sequence>
<protein>
    <recommendedName>
        <fullName evidence="1">Isoleucine--tRNA ligase</fullName>
        <ecNumber evidence="1">6.1.1.5</ecNumber>
    </recommendedName>
    <alternativeName>
        <fullName evidence="1">Isoleucyl-tRNA synthetase</fullName>
        <shortName evidence="1">IleRS</shortName>
    </alternativeName>
</protein>
<name>SYI_LACAC</name>
<dbReference type="EC" id="6.1.1.5" evidence="1"/>
<dbReference type="EMBL" id="CP000033">
    <property type="protein sequence ID" value="AAV42679.1"/>
    <property type="molecule type" value="Genomic_DNA"/>
</dbReference>
<dbReference type="RefSeq" id="WP_011254260.1">
    <property type="nucleotide sequence ID" value="NC_006814.3"/>
</dbReference>
<dbReference type="RefSeq" id="YP_193710.1">
    <property type="nucleotide sequence ID" value="NC_006814.3"/>
</dbReference>
<dbReference type="SMR" id="Q5FKU5"/>
<dbReference type="STRING" id="272621.LBA0817"/>
<dbReference type="KEGG" id="lac:LBA0817"/>
<dbReference type="PATRIC" id="fig|272621.13.peg.779"/>
<dbReference type="eggNOG" id="COG0060">
    <property type="taxonomic scope" value="Bacteria"/>
</dbReference>
<dbReference type="HOGENOM" id="CLU_001493_7_1_9"/>
<dbReference type="OrthoDB" id="9810365at2"/>
<dbReference type="BioCyc" id="LACI272621:G1G49-829-MONOMER"/>
<dbReference type="Proteomes" id="UP000006381">
    <property type="component" value="Chromosome"/>
</dbReference>
<dbReference type="GO" id="GO:0005829">
    <property type="term" value="C:cytosol"/>
    <property type="evidence" value="ECO:0007669"/>
    <property type="project" value="TreeGrafter"/>
</dbReference>
<dbReference type="GO" id="GO:0002161">
    <property type="term" value="F:aminoacyl-tRNA deacylase activity"/>
    <property type="evidence" value="ECO:0007669"/>
    <property type="project" value="InterPro"/>
</dbReference>
<dbReference type="GO" id="GO:0005524">
    <property type="term" value="F:ATP binding"/>
    <property type="evidence" value="ECO:0007669"/>
    <property type="project" value="UniProtKB-UniRule"/>
</dbReference>
<dbReference type="GO" id="GO:0004822">
    <property type="term" value="F:isoleucine-tRNA ligase activity"/>
    <property type="evidence" value="ECO:0007669"/>
    <property type="project" value="UniProtKB-UniRule"/>
</dbReference>
<dbReference type="GO" id="GO:0000049">
    <property type="term" value="F:tRNA binding"/>
    <property type="evidence" value="ECO:0007669"/>
    <property type="project" value="InterPro"/>
</dbReference>
<dbReference type="GO" id="GO:0008270">
    <property type="term" value="F:zinc ion binding"/>
    <property type="evidence" value="ECO:0007669"/>
    <property type="project" value="UniProtKB-UniRule"/>
</dbReference>
<dbReference type="GO" id="GO:0006428">
    <property type="term" value="P:isoleucyl-tRNA aminoacylation"/>
    <property type="evidence" value="ECO:0007669"/>
    <property type="project" value="UniProtKB-UniRule"/>
</dbReference>
<dbReference type="CDD" id="cd07960">
    <property type="entry name" value="Anticodon_Ia_Ile_BEm"/>
    <property type="match status" value="1"/>
</dbReference>
<dbReference type="CDD" id="cd00818">
    <property type="entry name" value="IleRS_core"/>
    <property type="match status" value="1"/>
</dbReference>
<dbReference type="FunFam" id="1.10.10.830:FF:000001">
    <property type="entry name" value="Isoleucine--tRNA ligase"/>
    <property type="match status" value="1"/>
</dbReference>
<dbReference type="FunFam" id="1.10.730.20:FF:000001">
    <property type="entry name" value="Isoleucine--tRNA ligase"/>
    <property type="match status" value="1"/>
</dbReference>
<dbReference type="FunFam" id="3.40.50.620:FF:000152">
    <property type="entry name" value="Isoleucine--tRNA ligase"/>
    <property type="match status" value="1"/>
</dbReference>
<dbReference type="FunFam" id="3.90.740.10:FF:000006">
    <property type="entry name" value="Isoleucine--tRNA ligase"/>
    <property type="match status" value="1"/>
</dbReference>
<dbReference type="Gene3D" id="1.10.730.20">
    <property type="match status" value="1"/>
</dbReference>
<dbReference type="Gene3D" id="3.40.50.620">
    <property type="entry name" value="HUPs"/>
    <property type="match status" value="2"/>
</dbReference>
<dbReference type="Gene3D" id="1.10.10.830">
    <property type="entry name" value="Ile-tRNA synthetase CP2 domain-like"/>
    <property type="match status" value="1"/>
</dbReference>
<dbReference type="HAMAP" id="MF_02002">
    <property type="entry name" value="Ile_tRNA_synth_type1"/>
    <property type="match status" value="1"/>
</dbReference>
<dbReference type="InterPro" id="IPR001412">
    <property type="entry name" value="aa-tRNA-synth_I_CS"/>
</dbReference>
<dbReference type="InterPro" id="IPR002300">
    <property type="entry name" value="aa-tRNA-synth_Ia"/>
</dbReference>
<dbReference type="InterPro" id="IPR033708">
    <property type="entry name" value="Anticodon_Ile_BEm"/>
</dbReference>
<dbReference type="InterPro" id="IPR002301">
    <property type="entry name" value="Ile-tRNA-ligase"/>
</dbReference>
<dbReference type="InterPro" id="IPR023585">
    <property type="entry name" value="Ile-tRNA-ligase_type1"/>
</dbReference>
<dbReference type="InterPro" id="IPR050081">
    <property type="entry name" value="Ile-tRNA_ligase"/>
</dbReference>
<dbReference type="InterPro" id="IPR013155">
    <property type="entry name" value="M/V/L/I-tRNA-synth_anticd-bd"/>
</dbReference>
<dbReference type="InterPro" id="IPR014729">
    <property type="entry name" value="Rossmann-like_a/b/a_fold"/>
</dbReference>
<dbReference type="InterPro" id="IPR009080">
    <property type="entry name" value="tRNAsynth_Ia_anticodon-bd"/>
</dbReference>
<dbReference type="InterPro" id="IPR009008">
    <property type="entry name" value="Val/Leu/Ile-tRNA-synth_edit"/>
</dbReference>
<dbReference type="InterPro" id="IPR010663">
    <property type="entry name" value="Znf_FPG/IleRS"/>
</dbReference>
<dbReference type="NCBIfam" id="TIGR00392">
    <property type="entry name" value="ileS"/>
    <property type="match status" value="1"/>
</dbReference>
<dbReference type="PANTHER" id="PTHR42765:SF1">
    <property type="entry name" value="ISOLEUCINE--TRNA LIGASE, MITOCHONDRIAL"/>
    <property type="match status" value="1"/>
</dbReference>
<dbReference type="PANTHER" id="PTHR42765">
    <property type="entry name" value="SOLEUCYL-TRNA SYNTHETASE"/>
    <property type="match status" value="1"/>
</dbReference>
<dbReference type="Pfam" id="PF08264">
    <property type="entry name" value="Anticodon_1"/>
    <property type="match status" value="1"/>
</dbReference>
<dbReference type="Pfam" id="PF00133">
    <property type="entry name" value="tRNA-synt_1"/>
    <property type="match status" value="1"/>
</dbReference>
<dbReference type="Pfam" id="PF06827">
    <property type="entry name" value="zf-FPG_IleRS"/>
    <property type="match status" value="1"/>
</dbReference>
<dbReference type="PRINTS" id="PR00984">
    <property type="entry name" value="TRNASYNTHILE"/>
</dbReference>
<dbReference type="SUPFAM" id="SSF47323">
    <property type="entry name" value="Anticodon-binding domain of a subclass of class I aminoacyl-tRNA synthetases"/>
    <property type="match status" value="1"/>
</dbReference>
<dbReference type="SUPFAM" id="SSF52374">
    <property type="entry name" value="Nucleotidylyl transferase"/>
    <property type="match status" value="1"/>
</dbReference>
<dbReference type="SUPFAM" id="SSF50677">
    <property type="entry name" value="ValRS/IleRS/LeuRS editing domain"/>
    <property type="match status" value="1"/>
</dbReference>
<dbReference type="PROSITE" id="PS00178">
    <property type="entry name" value="AA_TRNA_LIGASE_I"/>
    <property type="match status" value="1"/>
</dbReference>
<proteinExistence type="inferred from homology"/>
<accession>Q5FKU5</accession>
<organism>
    <name type="scientific">Lactobacillus acidophilus (strain ATCC 700396 / NCK56 / N2 / NCFM)</name>
    <dbReference type="NCBI Taxonomy" id="272621"/>
    <lineage>
        <taxon>Bacteria</taxon>
        <taxon>Bacillati</taxon>
        <taxon>Bacillota</taxon>
        <taxon>Bacilli</taxon>
        <taxon>Lactobacillales</taxon>
        <taxon>Lactobacillaceae</taxon>
        <taxon>Lactobacillus</taxon>
    </lineage>
</organism>
<keyword id="KW-0030">Aminoacyl-tRNA synthetase</keyword>
<keyword id="KW-0067">ATP-binding</keyword>
<keyword id="KW-0963">Cytoplasm</keyword>
<keyword id="KW-0436">Ligase</keyword>
<keyword id="KW-0479">Metal-binding</keyword>
<keyword id="KW-0547">Nucleotide-binding</keyword>
<keyword id="KW-0648">Protein biosynthesis</keyword>
<keyword id="KW-1185">Reference proteome</keyword>
<keyword id="KW-0862">Zinc</keyword>
<gene>
    <name evidence="1" type="primary">ileS</name>
    <name type="ordered locus">LBA0817</name>
</gene>
<feature type="chain" id="PRO_0000098401" description="Isoleucine--tRNA ligase">
    <location>
        <begin position="1"/>
        <end position="927"/>
    </location>
</feature>
<feature type="short sequence motif" description="'HIGH' region">
    <location>
        <begin position="57"/>
        <end position="67"/>
    </location>
</feature>
<feature type="short sequence motif" description="'KMSKS' region">
    <location>
        <begin position="594"/>
        <end position="598"/>
    </location>
</feature>
<feature type="binding site" evidence="1">
    <location>
        <position position="553"/>
    </location>
    <ligand>
        <name>L-isoleucyl-5'-AMP</name>
        <dbReference type="ChEBI" id="CHEBI:178002"/>
    </ligand>
</feature>
<feature type="binding site" evidence="1">
    <location>
        <position position="597"/>
    </location>
    <ligand>
        <name>ATP</name>
        <dbReference type="ChEBI" id="CHEBI:30616"/>
    </ligand>
</feature>
<feature type="binding site" evidence="1">
    <location>
        <position position="886"/>
    </location>
    <ligand>
        <name>Zn(2+)</name>
        <dbReference type="ChEBI" id="CHEBI:29105"/>
    </ligand>
</feature>
<feature type="binding site" evidence="1">
    <location>
        <position position="889"/>
    </location>
    <ligand>
        <name>Zn(2+)</name>
        <dbReference type="ChEBI" id="CHEBI:29105"/>
    </ligand>
</feature>
<feature type="binding site" evidence="1">
    <location>
        <position position="906"/>
    </location>
    <ligand>
        <name>Zn(2+)</name>
        <dbReference type="ChEBI" id="CHEBI:29105"/>
    </ligand>
</feature>
<feature type="binding site" evidence="1">
    <location>
        <position position="909"/>
    </location>
    <ligand>
        <name>Zn(2+)</name>
        <dbReference type="ChEBI" id="CHEBI:29105"/>
    </ligand>
</feature>
<reference key="1">
    <citation type="journal article" date="2005" name="Proc. Natl. Acad. Sci. U.S.A.">
        <title>Complete genome sequence of the probiotic lactic acid bacterium Lactobacillus acidophilus NCFM.</title>
        <authorList>
            <person name="Altermann E."/>
            <person name="Russell W.M."/>
            <person name="Azcarate-Peril M.A."/>
            <person name="Barrangou R."/>
            <person name="Buck B.L."/>
            <person name="McAuliffe O."/>
            <person name="Souther N."/>
            <person name="Dobson A."/>
            <person name="Duong T."/>
            <person name="Callanan M."/>
            <person name="Lick S."/>
            <person name="Hamrick A."/>
            <person name="Cano R."/>
            <person name="Klaenhammer T.R."/>
        </authorList>
    </citation>
    <scope>NUCLEOTIDE SEQUENCE [LARGE SCALE GENOMIC DNA]</scope>
    <source>
        <strain>ATCC 700396 / NCK56 / N2 / NCFM</strain>
    </source>
</reference>
<evidence type="ECO:0000255" key="1">
    <source>
        <dbReference type="HAMAP-Rule" id="MF_02002"/>
    </source>
</evidence>
<comment type="function">
    <text evidence="1">Catalyzes the attachment of isoleucine to tRNA(Ile). As IleRS can inadvertently accommodate and process structurally similar amino acids such as valine, to avoid such errors it has two additional distinct tRNA(Ile)-dependent editing activities. One activity is designated as 'pretransfer' editing and involves the hydrolysis of activated Val-AMP. The other activity is designated 'posttransfer' editing and involves deacylation of mischarged Val-tRNA(Ile).</text>
</comment>
<comment type="catalytic activity">
    <reaction evidence="1">
        <text>tRNA(Ile) + L-isoleucine + ATP = L-isoleucyl-tRNA(Ile) + AMP + diphosphate</text>
        <dbReference type="Rhea" id="RHEA:11060"/>
        <dbReference type="Rhea" id="RHEA-COMP:9666"/>
        <dbReference type="Rhea" id="RHEA-COMP:9695"/>
        <dbReference type="ChEBI" id="CHEBI:30616"/>
        <dbReference type="ChEBI" id="CHEBI:33019"/>
        <dbReference type="ChEBI" id="CHEBI:58045"/>
        <dbReference type="ChEBI" id="CHEBI:78442"/>
        <dbReference type="ChEBI" id="CHEBI:78528"/>
        <dbReference type="ChEBI" id="CHEBI:456215"/>
        <dbReference type="EC" id="6.1.1.5"/>
    </reaction>
</comment>
<comment type="cofactor">
    <cofactor evidence="1">
        <name>Zn(2+)</name>
        <dbReference type="ChEBI" id="CHEBI:29105"/>
    </cofactor>
    <text evidence="1">Binds 1 zinc ion per subunit.</text>
</comment>
<comment type="subunit">
    <text evidence="1">Monomer.</text>
</comment>
<comment type="subcellular location">
    <subcellularLocation>
        <location evidence="1">Cytoplasm</location>
    </subcellularLocation>
</comment>
<comment type="domain">
    <text evidence="1">IleRS has two distinct active sites: one for aminoacylation and one for editing. The misactivated valine is translocated from the active site to the editing site, which sterically excludes the correctly activated isoleucine. The single editing site contains two valyl binding pockets, one specific for each substrate (Val-AMP or Val-tRNA(Ile)).</text>
</comment>
<comment type="similarity">
    <text evidence="1">Belongs to the class-I aminoacyl-tRNA synthetase family. IleS type 1 subfamily.</text>
</comment>